<feature type="chain" id="PRO_0000411740" description="Vacuolar membrane protease">
    <location>
        <begin position="1"/>
        <end position="898"/>
    </location>
</feature>
<feature type="topological domain" description="Cytoplasmic" evidence="1">
    <location>
        <begin position="1"/>
        <end position="14"/>
    </location>
</feature>
<feature type="transmembrane region" description="Helical; Name=1" evidence="3">
    <location>
        <begin position="15"/>
        <end position="35"/>
    </location>
</feature>
<feature type="topological domain" description="Vacuolar" evidence="1">
    <location>
        <begin position="36"/>
        <end position="342"/>
    </location>
</feature>
<feature type="transmembrane region" description="Helical; Name=2" evidence="3">
    <location>
        <begin position="343"/>
        <end position="365"/>
    </location>
</feature>
<feature type="topological domain" description="Cytoplasmic" evidence="1">
    <location>
        <begin position="366"/>
        <end position="411"/>
    </location>
</feature>
<feature type="transmembrane region" description="Helical; Name=3" evidence="3">
    <location>
        <begin position="412"/>
        <end position="432"/>
    </location>
</feature>
<feature type="topological domain" description="Vacuolar" evidence="1">
    <location>
        <position position="433"/>
    </location>
</feature>
<feature type="transmembrane region" description="Helical; Name=4" evidence="3">
    <location>
        <begin position="434"/>
        <end position="454"/>
    </location>
</feature>
<feature type="topological domain" description="Cytoplasmic" evidence="1">
    <location>
        <begin position="455"/>
        <end position="479"/>
    </location>
</feature>
<feature type="transmembrane region" description="Helical; Name=5" evidence="3">
    <location>
        <begin position="480"/>
        <end position="500"/>
    </location>
</feature>
<feature type="topological domain" description="Vacuolar" evidence="1">
    <location>
        <begin position="501"/>
        <end position="509"/>
    </location>
</feature>
<feature type="transmembrane region" description="Helical; Name=6" evidence="3">
    <location>
        <begin position="510"/>
        <end position="530"/>
    </location>
</feature>
<feature type="topological domain" description="Cytoplasmic" evidence="1">
    <location>
        <begin position="531"/>
        <end position="593"/>
    </location>
</feature>
<feature type="transmembrane region" description="Helical; Name=7" evidence="3">
    <location>
        <begin position="594"/>
        <end position="614"/>
    </location>
</feature>
<feature type="topological domain" description="Vacuolar" evidence="1">
    <location>
        <begin position="615"/>
        <end position="635"/>
    </location>
</feature>
<feature type="transmembrane region" description="Helical; Name=8" evidence="3">
    <location>
        <begin position="636"/>
        <end position="656"/>
    </location>
</feature>
<feature type="topological domain" description="Cytoplasmic" evidence="1">
    <location>
        <begin position="657"/>
        <end position="664"/>
    </location>
</feature>
<feature type="transmembrane region" description="Helical; Name=9" evidence="3">
    <location>
        <begin position="665"/>
        <end position="685"/>
    </location>
</feature>
<feature type="topological domain" description="Vacuolar" evidence="1">
    <location>
        <begin position="686"/>
        <end position="898"/>
    </location>
</feature>
<feature type="active site" description="Proton acceptor" evidence="2">
    <location>
        <position position="183"/>
    </location>
</feature>
<feature type="binding site" evidence="2">
    <location>
        <position position="139"/>
    </location>
    <ligand>
        <name>Zn(2+)</name>
        <dbReference type="ChEBI" id="CHEBI:29105"/>
        <label>1</label>
        <note>catalytic</note>
    </ligand>
</feature>
<feature type="binding site" evidence="2">
    <location>
        <position position="151"/>
    </location>
    <ligand>
        <name>Zn(2+)</name>
        <dbReference type="ChEBI" id="CHEBI:29105"/>
        <label>1</label>
        <note>catalytic</note>
    </ligand>
</feature>
<feature type="binding site" evidence="2">
    <location>
        <position position="151"/>
    </location>
    <ligand>
        <name>Zn(2+)</name>
        <dbReference type="ChEBI" id="CHEBI:29105"/>
        <label>2</label>
        <note>catalytic</note>
    </ligand>
</feature>
<feature type="binding site" evidence="2">
    <location>
        <position position="184"/>
    </location>
    <ligand>
        <name>Zn(2+)</name>
        <dbReference type="ChEBI" id="CHEBI:29105"/>
        <label>2</label>
        <note>catalytic</note>
    </ligand>
</feature>
<feature type="binding site" evidence="2">
    <location>
        <position position="209"/>
    </location>
    <ligand>
        <name>Zn(2+)</name>
        <dbReference type="ChEBI" id="CHEBI:29105"/>
        <label>1</label>
        <note>catalytic</note>
    </ligand>
</feature>
<feature type="binding site" evidence="2">
    <location>
        <position position="284"/>
    </location>
    <ligand>
        <name>Zn(2+)</name>
        <dbReference type="ChEBI" id="CHEBI:29105"/>
        <label>2</label>
        <note>catalytic</note>
    </ligand>
</feature>
<feature type="site" description="Transition state stabilizer" evidence="2">
    <location>
        <position position="283"/>
    </location>
</feature>
<feature type="glycosylation site" description="N-linked (GlcNAc...) asparagine" evidence="4">
    <location>
        <position position="50"/>
    </location>
</feature>
<feature type="glycosylation site" description="N-linked (GlcNAc...) asparagine" evidence="4">
    <location>
        <position position="103"/>
    </location>
</feature>
<feature type="glycosylation site" description="N-linked (GlcNAc...) asparagine" evidence="4">
    <location>
        <position position="110"/>
    </location>
</feature>
<feature type="glycosylation site" description="N-linked (GlcNAc...) asparagine" evidence="4">
    <location>
        <position position="200"/>
    </location>
</feature>
<feature type="glycosylation site" description="N-linked (GlcNAc...) asparagine" evidence="4">
    <location>
        <position position="704"/>
    </location>
</feature>
<feature type="glycosylation site" description="N-linked (GlcNAc...) asparagine" evidence="4">
    <location>
        <position position="733"/>
    </location>
</feature>
<feature type="glycosylation site" description="N-linked (GlcNAc...) asparagine" evidence="4">
    <location>
        <position position="764"/>
    </location>
</feature>
<sequence>MGIVDYLVAAVSFRTLPTTFVAVLVYLAIFISVLITDELPATPKDQRGLNLTQAYSDLRQIAARPHPYNSHANDVVHDFILTRLQDATAGYDYAHVFDDKVSNGSWSSRNNSVYFEGTNILVKVDGHDADKSGALFSAHYDSVSTAPGATDDGMGVATLLQLVEYYVKHRPQRTAVFNINNGEEDWLNGAHAFLEHPWSNLTDTFLNLEGASSGGRPLLFRATATAPVRAFREKYVTHPHGNVLSSDAFARGVVRSGTDYSVYVDGRGMDGADLAFYKGRSRYHTRYDAVQYTDGGVRSLWAMMEAAQGVSGALLSSEAVHGDKGGAPVYFDLFGQALIVFPLSAMITFNIVFLVVGPIMLALLVTFDIVARHRRQEMIGGGYEEQGFFARAWTSFKSFRWVGGFWKHAKFWVALAVTVGLQVLLCVGYLYINPLIAYSSSHIVLLSFLSLAYLSTYLVHNIPSPTDTYGSHLPEQQKQAALFQLYFFTWILLLAATVVGAKLSVGSFYILSLWNAVLFAACAIGSIAGLLSSHTVEGDASYGSRRRIRGVRYDREGEEEGVESETAPTEVTPLIAQPITVVAPGGKEGEEVSGAIGWWFVQFVLSVPAVVILVSQLALLMLAATEQTLADGSPAVTVYGGASLMSVLAILPLAPFACKLHRRVAYVALVVLIASTAYAWLVFPFSERAPLKVFFQQQVDLDANITETRITGHPAYLRQAIAALPSAGGAPLNCTADDAKAGLQTCGWTPPPALEPSVIALDFNVSRSEGQNQARFEIAETDTRACRVYFDQAVTRFQVHGGTEGVQKGFEIPEEGVRELRLWSRTWDRTWVVDVDREGSALTGRVACEWSEYASGSLGVETRTRIPAYEEVLTFLPSWAVASKFADGLVEGYKAFAV</sequence>
<evidence type="ECO:0000250" key="1">
    <source>
        <dbReference type="UniProtKB" id="P38244"/>
    </source>
</evidence>
<evidence type="ECO:0000250" key="2">
    <source>
        <dbReference type="UniProtKB" id="P80561"/>
    </source>
</evidence>
<evidence type="ECO:0000255" key="3"/>
<evidence type="ECO:0000255" key="4">
    <source>
        <dbReference type="PROSITE-ProRule" id="PRU00498"/>
    </source>
</evidence>
<evidence type="ECO:0000305" key="5"/>
<comment type="function">
    <text evidence="1">May be involved in vacuolar sorting and osmoregulation.</text>
</comment>
<comment type="cofactor">
    <cofactor evidence="2">
        <name>Zn(2+)</name>
        <dbReference type="ChEBI" id="CHEBI:29105"/>
    </cofactor>
    <text evidence="2">Binds 2 Zn(2+) ions per subunit.</text>
</comment>
<comment type="subcellular location">
    <subcellularLocation>
        <location evidence="1">Vacuole membrane</location>
        <topology evidence="3">Multi-pass membrane protein</topology>
    </subcellularLocation>
</comment>
<comment type="similarity">
    <text evidence="5">Belongs to the peptidase M28 family.</text>
</comment>
<keyword id="KW-0325">Glycoprotein</keyword>
<keyword id="KW-0378">Hydrolase</keyword>
<keyword id="KW-0472">Membrane</keyword>
<keyword id="KW-0479">Metal-binding</keyword>
<keyword id="KW-0482">Metalloprotease</keyword>
<keyword id="KW-0645">Protease</keyword>
<keyword id="KW-1185">Reference proteome</keyword>
<keyword id="KW-0812">Transmembrane</keyword>
<keyword id="KW-1133">Transmembrane helix</keyword>
<keyword id="KW-0926">Vacuole</keyword>
<keyword id="KW-0862">Zinc</keyword>
<proteinExistence type="inferred from homology"/>
<reference key="1">
    <citation type="journal article" date="2010" name="Nat. Biotechnol.">
        <title>Genome sequence of the model mushroom Schizophyllum commune.</title>
        <authorList>
            <person name="Ohm R.A."/>
            <person name="de Jong J.F."/>
            <person name="Lugones L.G."/>
            <person name="Aerts A."/>
            <person name="Kothe E."/>
            <person name="Stajich J.E."/>
            <person name="de Vries R.P."/>
            <person name="Record E."/>
            <person name="Levasseur A."/>
            <person name="Baker S.E."/>
            <person name="Bartholomew K.A."/>
            <person name="Coutinho P.M."/>
            <person name="Erdmann S."/>
            <person name="Fowler T.J."/>
            <person name="Gathman A.C."/>
            <person name="Lombard V."/>
            <person name="Henrissat B."/>
            <person name="Knabe N."/>
            <person name="Kuees U."/>
            <person name="Lilly W.W."/>
            <person name="Lindquist E."/>
            <person name="Lucas S."/>
            <person name="Magnuson J.K."/>
            <person name="Piumi F."/>
            <person name="Raudaskoski M."/>
            <person name="Salamov A."/>
            <person name="Schmutz J."/>
            <person name="Schwarze F.W.M.R."/>
            <person name="vanKuyk P.A."/>
            <person name="Horton J.S."/>
            <person name="Grigoriev I.V."/>
            <person name="Woesten H.A.B."/>
        </authorList>
    </citation>
    <scope>NUCLEOTIDE SEQUENCE [LARGE SCALE GENOMIC DNA]</scope>
    <source>
        <strain>H4-8 / FGSC 9210</strain>
    </source>
</reference>
<gene>
    <name type="ORF">SCHCODRAFT_69280</name>
</gene>
<accession>D8QAM0</accession>
<protein>
    <recommendedName>
        <fullName evidence="1">Vacuolar membrane protease</fullName>
        <ecNumber evidence="5">3.4.-.-</ecNumber>
    </recommendedName>
    <alternativeName>
        <fullName evidence="1">FXNA-related family protease 1</fullName>
    </alternativeName>
</protein>
<dbReference type="EC" id="3.4.-.-" evidence="5"/>
<dbReference type="EMBL" id="GL377308">
    <property type="protein sequence ID" value="EFI95857.1"/>
    <property type="molecule type" value="Genomic_DNA"/>
</dbReference>
<dbReference type="RefSeq" id="XP_003030760.1">
    <property type="nucleotide sequence ID" value="XM_003030714.1"/>
</dbReference>
<dbReference type="SMR" id="D8QAM0"/>
<dbReference type="FunCoup" id="D8QAM0">
    <property type="interactions" value="34"/>
</dbReference>
<dbReference type="STRING" id="578458.D8QAM0"/>
<dbReference type="VEuPathDB" id="FungiDB:SCHCODRAFT_02545875"/>
<dbReference type="eggNOG" id="KOG2194">
    <property type="taxonomic scope" value="Eukaryota"/>
</dbReference>
<dbReference type="HOGENOM" id="CLU_006412_1_0_1"/>
<dbReference type="InParanoid" id="D8QAM0"/>
<dbReference type="OMA" id="TPWPVTI"/>
<dbReference type="Proteomes" id="UP000007431">
    <property type="component" value="Unassembled WGS sequence"/>
</dbReference>
<dbReference type="GO" id="GO:0005774">
    <property type="term" value="C:vacuolar membrane"/>
    <property type="evidence" value="ECO:0007669"/>
    <property type="project" value="UniProtKB-SubCell"/>
</dbReference>
<dbReference type="GO" id="GO:0046872">
    <property type="term" value="F:metal ion binding"/>
    <property type="evidence" value="ECO:0007669"/>
    <property type="project" value="UniProtKB-KW"/>
</dbReference>
<dbReference type="GO" id="GO:0008235">
    <property type="term" value="F:metalloexopeptidase activity"/>
    <property type="evidence" value="ECO:0007669"/>
    <property type="project" value="InterPro"/>
</dbReference>
<dbReference type="GO" id="GO:0006508">
    <property type="term" value="P:proteolysis"/>
    <property type="evidence" value="ECO:0007669"/>
    <property type="project" value="UniProtKB-KW"/>
</dbReference>
<dbReference type="CDD" id="cd03875">
    <property type="entry name" value="M28_Fxna_like"/>
    <property type="match status" value="1"/>
</dbReference>
<dbReference type="Gene3D" id="3.40.630.10">
    <property type="entry name" value="Zn peptidases"/>
    <property type="match status" value="1"/>
</dbReference>
<dbReference type="InterPro" id="IPR048024">
    <property type="entry name" value="Fxna-like_M28_dom"/>
</dbReference>
<dbReference type="InterPro" id="IPR045175">
    <property type="entry name" value="M28_fam"/>
</dbReference>
<dbReference type="InterPro" id="IPR007484">
    <property type="entry name" value="Peptidase_M28"/>
</dbReference>
<dbReference type="InterPro" id="IPR053975">
    <property type="entry name" value="PFF1_C"/>
</dbReference>
<dbReference type="InterPro" id="IPR053976">
    <property type="entry name" value="PFF1_TM"/>
</dbReference>
<dbReference type="PANTHER" id="PTHR12147">
    <property type="entry name" value="METALLOPEPTIDASE M28 FAMILY MEMBER"/>
    <property type="match status" value="1"/>
</dbReference>
<dbReference type="PANTHER" id="PTHR12147:SF58">
    <property type="entry name" value="VACUOLAR MEMBRANE PROTEASE"/>
    <property type="match status" value="1"/>
</dbReference>
<dbReference type="Pfam" id="PF04389">
    <property type="entry name" value="Peptidase_M28"/>
    <property type="match status" value="1"/>
</dbReference>
<dbReference type="Pfam" id="PF22250">
    <property type="entry name" value="PFF1_C"/>
    <property type="match status" value="1"/>
</dbReference>
<dbReference type="Pfam" id="PF22251">
    <property type="entry name" value="PFF1_TM"/>
    <property type="match status" value="2"/>
</dbReference>
<dbReference type="SUPFAM" id="SSF53187">
    <property type="entry name" value="Zn-dependent exopeptidases"/>
    <property type="match status" value="1"/>
</dbReference>
<name>PFF1_SCHCM</name>
<organism>
    <name type="scientific">Schizophyllum commune (strain H4-8 / FGSC 9210)</name>
    <name type="common">Split gill fungus</name>
    <dbReference type="NCBI Taxonomy" id="578458"/>
    <lineage>
        <taxon>Eukaryota</taxon>
        <taxon>Fungi</taxon>
        <taxon>Dikarya</taxon>
        <taxon>Basidiomycota</taxon>
        <taxon>Agaricomycotina</taxon>
        <taxon>Agaricomycetes</taxon>
        <taxon>Agaricomycetidae</taxon>
        <taxon>Agaricales</taxon>
        <taxon>Schizophyllaceae</taxon>
        <taxon>Schizophyllum</taxon>
    </lineage>
</organism>